<protein>
    <recommendedName>
        <fullName>Ankyrin repeat and SOCS box protein 17</fullName>
        <shortName>ASB-17</shortName>
    </recommendedName>
</protein>
<dbReference type="EMBL" id="AB071128">
    <property type="protein sequence ID" value="BAB64522.1"/>
    <property type="molecule type" value="mRNA"/>
</dbReference>
<dbReference type="RefSeq" id="NP_001306291.1">
    <property type="nucleotide sequence ID" value="NM_001319362.1"/>
</dbReference>
<dbReference type="SMR" id="Q95LR4"/>
<dbReference type="STRING" id="9541.ENSMFAP00000026968"/>
<dbReference type="eggNOG" id="ENOG502QVW2">
    <property type="taxonomic scope" value="Eukaryota"/>
</dbReference>
<dbReference type="UniPathway" id="UPA00143"/>
<dbReference type="Proteomes" id="UP000233100">
    <property type="component" value="Unplaced"/>
</dbReference>
<dbReference type="GO" id="GO:0035556">
    <property type="term" value="P:intracellular signal transduction"/>
    <property type="evidence" value="ECO:0007669"/>
    <property type="project" value="InterPro"/>
</dbReference>
<dbReference type="GO" id="GO:0016567">
    <property type="term" value="P:protein ubiquitination"/>
    <property type="evidence" value="ECO:0007669"/>
    <property type="project" value="UniProtKB-UniPathway"/>
</dbReference>
<dbReference type="CDD" id="cd03716">
    <property type="entry name" value="SOCS_ASB_like"/>
    <property type="match status" value="1"/>
</dbReference>
<dbReference type="Gene3D" id="1.25.40.20">
    <property type="entry name" value="Ankyrin repeat-containing domain"/>
    <property type="match status" value="1"/>
</dbReference>
<dbReference type="InterPro" id="IPR036770">
    <property type="entry name" value="Ankyrin_rpt-contain_sf"/>
</dbReference>
<dbReference type="InterPro" id="IPR039147">
    <property type="entry name" value="ASB17"/>
</dbReference>
<dbReference type="InterPro" id="IPR001496">
    <property type="entry name" value="SOCS_box"/>
</dbReference>
<dbReference type="InterPro" id="IPR036036">
    <property type="entry name" value="SOCS_box-like_dom_sf"/>
</dbReference>
<dbReference type="PANTHER" id="PTHR20966">
    <property type="entry name" value="ANKYRIN REPEAT AND SOCS BOX PROTEIN 17"/>
    <property type="match status" value="1"/>
</dbReference>
<dbReference type="PANTHER" id="PTHR20966:SF2">
    <property type="entry name" value="ANKYRIN REPEAT AND SOCS BOX PROTEIN 17"/>
    <property type="match status" value="1"/>
</dbReference>
<dbReference type="Pfam" id="PF07525">
    <property type="entry name" value="SOCS_box"/>
    <property type="match status" value="1"/>
</dbReference>
<dbReference type="SMART" id="SM00969">
    <property type="entry name" value="SOCS_box"/>
    <property type="match status" value="1"/>
</dbReference>
<dbReference type="SUPFAM" id="SSF48403">
    <property type="entry name" value="Ankyrin repeat"/>
    <property type="match status" value="1"/>
</dbReference>
<dbReference type="SUPFAM" id="SSF158235">
    <property type="entry name" value="SOCS box-like"/>
    <property type="match status" value="1"/>
</dbReference>
<dbReference type="PROSITE" id="PS50225">
    <property type="entry name" value="SOCS"/>
    <property type="match status" value="1"/>
</dbReference>
<comment type="function">
    <text evidence="1">May be a substrate-recognition component of a SCF-like ECS (Elongin-Cullin-SOCS-box protein) E3 ubiquitin-protein ligase complex which mediates the ubiquitination and subsequent proteasomal degradation of target proteins.</text>
</comment>
<comment type="pathway">
    <text>Protein modification; protein ubiquitination.</text>
</comment>
<comment type="domain">
    <text evidence="1">The SOCS box domain mediates the interaction with the Elongin BC complex, an adapter module in different E3 ubiquitin-protein ligase complexes.</text>
</comment>
<comment type="similarity">
    <text evidence="3">Belongs to the ankyrin SOCS box (ASB) family.</text>
</comment>
<organism>
    <name type="scientific">Macaca fascicularis</name>
    <name type="common">Crab-eating macaque</name>
    <name type="synonym">Cynomolgus monkey</name>
    <dbReference type="NCBI Taxonomy" id="9541"/>
    <lineage>
        <taxon>Eukaryota</taxon>
        <taxon>Metazoa</taxon>
        <taxon>Chordata</taxon>
        <taxon>Craniata</taxon>
        <taxon>Vertebrata</taxon>
        <taxon>Euteleostomi</taxon>
        <taxon>Mammalia</taxon>
        <taxon>Eutheria</taxon>
        <taxon>Euarchontoglires</taxon>
        <taxon>Primates</taxon>
        <taxon>Haplorrhini</taxon>
        <taxon>Catarrhini</taxon>
        <taxon>Cercopithecidae</taxon>
        <taxon>Cercopithecinae</taxon>
        <taxon>Macaca</taxon>
    </lineage>
</organism>
<sequence>MSKSNKLCRKTSCPRSNIFCNLLDKIVKRPSLQFLGQWGYHCYEPRIYRSLAKILRYVDLDGFDALLTDYIAFVEKSRYRFEVSFNLDFTEICVNTILYWVFARKGNPDFVELLLKKTKDYVQDRSCNLALIWRTFTPVYCPSPLSGITPLFYVAQTRQSNIFKILLQYGILEREKNPINIVLTIVLYPSRVRVMVDRELADIHEDAKTCLVLCSRVLSVISVKEIKTQLSLGRRPIISNWFDYIPSTRYKDPCELLHLCRLTIRNQLLTNNMLPDGIFSLLIPARLQNYLNLEI</sequence>
<accession>Q95LR4</accession>
<evidence type="ECO:0000250" key="1"/>
<evidence type="ECO:0000255" key="2">
    <source>
        <dbReference type="PROSITE-ProRule" id="PRU00194"/>
    </source>
</evidence>
<evidence type="ECO:0000305" key="3"/>
<proteinExistence type="evidence at transcript level"/>
<gene>
    <name type="primary">ASB17</name>
    <name type="ORF">QtsA-19788</name>
</gene>
<reference key="1">
    <citation type="journal article" date="2002" name="BMC Genomics">
        <title>Cynomolgus monkey testicular cDNAs for discovery of novel human genes in the human genome sequence.</title>
        <authorList>
            <person name="Osada N."/>
            <person name="Hida M."/>
            <person name="Kusuda J."/>
            <person name="Tanuma R."/>
            <person name="Hirata M."/>
            <person name="Suto Y."/>
            <person name="Hirai M."/>
            <person name="Terao K."/>
            <person name="Sugano S."/>
            <person name="Hashimoto K."/>
        </authorList>
    </citation>
    <scope>NUCLEOTIDE SEQUENCE [LARGE SCALE MRNA]</scope>
    <source>
        <tissue>Testis</tissue>
    </source>
</reference>
<feature type="chain" id="PRO_0000066960" description="Ankyrin repeat and SOCS box protein 17">
    <location>
        <begin position="1"/>
        <end position="295"/>
    </location>
</feature>
<feature type="repeat" description="ANK">
    <location>
        <begin position="146"/>
        <end position="176"/>
    </location>
</feature>
<feature type="domain" description="SOCS box" evidence="2">
    <location>
        <begin position="232"/>
        <end position="295"/>
    </location>
</feature>
<name>ASB17_MACFA</name>
<keyword id="KW-0040">ANK repeat</keyword>
<keyword id="KW-1185">Reference proteome</keyword>
<keyword id="KW-0833">Ubl conjugation pathway</keyword>